<keyword id="KW-0067">ATP-binding</keyword>
<keyword id="KW-0274">FAD</keyword>
<keyword id="KW-0285">Flavoprotein</keyword>
<keyword id="KW-0288">FMN</keyword>
<keyword id="KW-0547">Nucleotide-binding</keyword>
<keyword id="KW-0548">Nucleotidyltransferase</keyword>
<keyword id="KW-1185">Reference proteome</keyword>
<keyword id="KW-0808">Transferase</keyword>
<proteinExistence type="inferred from homology"/>
<reference key="1">
    <citation type="journal article" date="1997" name="Nature">
        <title>The complete genome sequence of the hyperthermophilic, sulphate-reducing archaeon Archaeoglobus fulgidus.</title>
        <authorList>
            <person name="Klenk H.-P."/>
            <person name="Clayton R.A."/>
            <person name="Tomb J.-F."/>
            <person name="White O."/>
            <person name="Nelson K.E."/>
            <person name="Ketchum K.A."/>
            <person name="Dodson R.J."/>
            <person name="Gwinn M.L."/>
            <person name="Hickey E.K."/>
            <person name="Peterson J.D."/>
            <person name="Richardson D.L."/>
            <person name="Kerlavage A.R."/>
            <person name="Graham D.E."/>
            <person name="Kyrpides N.C."/>
            <person name="Fleischmann R.D."/>
            <person name="Quackenbush J."/>
            <person name="Lee N.H."/>
            <person name="Sutton G.G."/>
            <person name="Gill S.R."/>
            <person name="Kirkness E.F."/>
            <person name="Dougherty B.A."/>
            <person name="McKenney K."/>
            <person name="Adams M.D."/>
            <person name="Loftus B.J."/>
            <person name="Peterson S.N."/>
            <person name="Reich C.I."/>
            <person name="McNeil L.K."/>
            <person name="Badger J.H."/>
            <person name="Glodek A."/>
            <person name="Zhou L."/>
            <person name="Overbeek R."/>
            <person name="Gocayne J.D."/>
            <person name="Weidman J.F."/>
            <person name="McDonald L.A."/>
            <person name="Utterback T.R."/>
            <person name="Cotton M.D."/>
            <person name="Spriggs T."/>
            <person name="Artiach P."/>
            <person name="Kaine B.P."/>
            <person name="Sykes S.M."/>
            <person name="Sadow P.W."/>
            <person name="D'Andrea K.P."/>
            <person name="Bowman C."/>
            <person name="Fujii C."/>
            <person name="Garland S.A."/>
            <person name="Mason T.M."/>
            <person name="Olsen G.J."/>
            <person name="Fraser C.M."/>
            <person name="Smith H.O."/>
            <person name="Woese C.R."/>
            <person name="Venter J.C."/>
        </authorList>
    </citation>
    <scope>NUCLEOTIDE SEQUENCE [LARGE SCALE GENOMIC DNA]</scope>
    <source>
        <strain>ATCC 49558 / DSM 4304 / JCM 9628 / NBRC 100126 / VC-16</strain>
    </source>
</reference>
<accession>O28854</accession>
<evidence type="ECO:0000255" key="1">
    <source>
        <dbReference type="HAMAP-Rule" id="MF_02115"/>
    </source>
</evidence>
<dbReference type="EC" id="2.7.7.2" evidence="1"/>
<dbReference type="EMBL" id="AE000782">
    <property type="protein sequence ID" value="AAB89835.1"/>
    <property type="molecule type" value="Genomic_DNA"/>
</dbReference>
<dbReference type="PIR" id="A69427">
    <property type="entry name" value="A69427"/>
</dbReference>
<dbReference type="SMR" id="O28854"/>
<dbReference type="STRING" id="224325.AF_1418"/>
<dbReference type="PaxDb" id="224325-AF_1418"/>
<dbReference type="EnsemblBacteria" id="AAB89835">
    <property type="protein sequence ID" value="AAB89835"/>
    <property type="gene ID" value="AF_1418"/>
</dbReference>
<dbReference type="KEGG" id="afu:AF_1418"/>
<dbReference type="eggNOG" id="arCOG01222">
    <property type="taxonomic scope" value="Archaea"/>
</dbReference>
<dbReference type="HOGENOM" id="CLU_034585_2_1_2"/>
<dbReference type="PhylomeDB" id="O28854"/>
<dbReference type="UniPathway" id="UPA00277">
    <property type="reaction ID" value="UER00407"/>
</dbReference>
<dbReference type="Proteomes" id="UP000002199">
    <property type="component" value="Chromosome"/>
</dbReference>
<dbReference type="GO" id="GO:0005524">
    <property type="term" value="F:ATP binding"/>
    <property type="evidence" value="ECO:0007669"/>
    <property type="project" value="UniProtKB-UniRule"/>
</dbReference>
<dbReference type="GO" id="GO:0003919">
    <property type="term" value="F:FMN adenylyltransferase activity"/>
    <property type="evidence" value="ECO:0007669"/>
    <property type="project" value="UniProtKB-UniRule"/>
</dbReference>
<dbReference type="GO" id="GO:0006747">
    <property type="term" value="P:FAD biosynthetic process"/>
    <property type="evidence" value="ECO:0007669"/>
    <property type="project" value="UniProtKB-UniRule"/>
</dbReference>
<dbReference type="GO" id="GO:0046444">
    <property type="term" value="P:FMN metabolic process"/>
    <property type="evidence" value="ECO:0007669"/>
    <property type="project" value="UniProtKB-UniRule"/>
</dbReference>
<dbReference type="CDD" id="cd02170">
    <property type="entry name" value="cytidylyltransferase"/>
    <property type="match status" value="1"/>
</dbReference>
<dbReference type="Gene3D" id="3.40.50.620">
    <property type="entry name" value="HUPs"/>
    <property type="match status" value="1"/>
</dbReference>
<dbReference type="HAMAP" id="MF_02115">
    <property type="entry name" value="FAD_synth_arch"/>
    <property type="match status" value="1"/>
</dbReference>
<dbReference type="InterPro" id="IPR050385">
    <property type="entry name" value="Archaeal_FAD_synthase"/>
</dbReference>
<dbReference type="InterPro" id="IPR004821">
    <property type="entry name" value="Cyt_trans-like"/>
</dbReference>
<dbReference type="InterPro" id="IPR024902">
    <property type="entry name" value="FAD_synth_RibL"/>
</dbReference>
<dbReference type="InterPro" id="IPR014729">
    <property type="entry name" value="Rossmann-like_a/b/a_fold"/>
</dbReference>
<dbReference type="NCBIfam" id="TIGR00125">
    <property type="entry name" value="cyt_tran_rel"/>
    <property type="match status" value="1"/>
</dbReference>
<dbReference type="PANTHER" id="PTHR43793">
    <property type="entry name" value="FAD SYNTHASE"/>
    <property type="match status" value="1"/>
</dbReference>
<dbReference type="PANTHER" id="PTHR43793:SF1">
    <property type="entry name" value="FAD SYNTHASE"/>
    <property type="match status" value="1"/>
</dbReference>
<dbReference type="Pfam" id="PF01467">
    <property type="entry name" value="CTP_transf_like"/>
    <property type="match status" value="1"/>
</dbReference>
<dbReference type="SUPFAM" id="SSF52374">
    <property type="entry name" value="Nucleotidylyl transferase"/>
    <property type="match status" value="1"/>
</dbReference>
<protein>
    <recommendedName>
        <fullName evidence="1">FAD synthase</fullName>
        <ecNumber evidence="1">2.7.7.2</ecNumber>
    </recommendedName>
    <alternativeName>
        <fullName evidence="1">FMN adenylyltransferase</fullName>
    </alternativeName>
    <alternativeName>
        <fullName evidence="1">Flavin adenine dinucleotide synthase</fullName>
    </alternativeName>
</protein>
<feature type="chain" id="PRO_0000406232" description="FAD synthase">
    <location>
        <begin position="1"/>
        <end position="137"/>
    </location>
</feature>
<feature type="binding site" evidence="1">
    <location>
        <begin position="5"/>
        <end position="6"/>
    </location>
    <ligand>
        <name>ATP</name>
        <dbReference type="ChEBI" id="CHEBI:30616"/>
    </ligand>
</feature>
<feature type="binding site" evidence="1">
    <location>
        <begin position="10"/>
        <end position="13"/>
    </location>
    <ligand>
        <name>ATP</name>
        <dbReference type="ChEBI" id="CHEBI:30616"/>
    </ligand>
</feature>
<feature type="binding site" evidence="1">
    <location>
        <position position="88"/>
    </location>
    <ligand>
        <name>ATP</name>
        <dbReference type="ChEBI" id="CHEBI:30616"/>
    </ligand>
</feature>
<comment type="function">
    <text evidence="1">Catalyzes the transfer of the AMP portion of ATP to flavin mononucleotide (FMN) to produce flavin adenine dinucleotide (FAD) coenzyme.</text>
</comment>
<comment type="catalytic activity">
    <reaction evidence="1">
        <text>FMN + ATP + H(+) = FAD + diphosphate</text>
        <dbReference type="Rhea" id="RHEA:17237"/>
        <dbReference type="ChEBI" id="CHEBI:15378"/>
        <dbReference type="ChEBI" id="CHEBI:30616"/>
        <dbReference type="ChEBI" id="CHEBI:33019"/>
        <dbReference type="ChEBI" id="CHEBI:57692"/>
        <dbReference type="ChEBI" id="CHEBI:58210"/>
        <dbReference type="EC" id="2.7.7.2"/>
    </reaction>
</comment>
<comment type="cofactor">
    <cofactor evidence="1">
        <name>a divalent metal cation</name>
        <dbReference type="ChEBI" id="CHEBI:60240"/>
    </cofactor>
</comment>
<comment type="pathway">
    <text evidence="1">Cofactor biosynthesis; FAD biosynthesis; FAD from FMN: step 1/1.</text>
</comment>
<comment type="subunit">
    <text evidence="1">Homodimer.</text>
</comment>
<comment type="similarity">
    <text evidence="1">Belongs to the archaeal FAD synthase family.</text>
</comment>
<sequence>MATGTFDIIHPGHITFLREAKKLGDELIVIVAREKNVRHKPKPVVPEEQRRRVVEAIKYVDKAILGDEDDMFRPIMELKPDVIVLGHDQHFDEDWLKEELRKRNLNCEVVRIRVKEDCPLCSSHKIIERILEKYGGR</sequence>
<name>RIBL_ARCFU</name>
<organism>
    <name type="scientific">Archaeoglobus fulgidus (strain ATCC 49558 / DSM 4304 / JCM 9628 / NBRC 100126 / VC-16)</name>
    <dbReference type="NCBI Taxonomy" id="224325"/>
    <lineage>
        <taxon>Archaea</taxon>
        <taxon>Methanobacteriati</taxon>
        <taxon>Methanobacteriota</taxon>
        <taxon>Archaeoglobi</taxon>
        <taxon>Archaeoglobales</taxon>
        <taxon>Archaeoglobaceae</taxon>
        <taxon>Archaeoglobus</taxon>
    </lineage>
</organism>
<gene>
    <name evidence="1" type="primary">ribL</name>
    <name type="ordered locus">AF_1418</name>
</gene>